<name>YL582_MIMIV</name>
<organism>
    <name type="scientific">Acanthamoeba polyphaga mimivirus</name>
    <name type="common">APMV</name>
    <dbReference type="NCBI Taxonomy" id="212035"/>
    <lineage>
        <taxon>Viruses</taxon>
        <taxon>Varidnaviria</taxon>
        <taxon>Bamfordvirae</taxon>
        <taxon>Nucleocytoviricota</taxon>
        <taxon>Megaviricetes</taxon>
        <taxon>Imitervirales</taxon>
        <taxon>Mimiviridae</taxon>
        <taxon>Megamimivirinae</taxon>
        <taxon>Mimivirus</taxon>
        <taxon>Mimivirus bradfordmassiliense</taxon>
    </lineage>
</organism>
<reference key="1">
    <citation type="journal article" date="2004" name="Science">
        <title>The 1.2-megabase genome sequence of Mimivirus.</title>
        <authorList>
            <person name="Raoult D."/>
            <person name="Audic S."/>
            <person name="Robert C."/>
            <person name="Abergel C."/>
            <person name="Renesto P."/>
            <person name="Ogata H."/>
            <person name="La Scola B."/>
            <person name="Susan M."/>
            <person name="Claverie J.-M."/>
        </authorList>
    </citation>
    <scope>NUCLEOTIDE SEQUENCE [LARGE SCALE GENOMIC DNA]</scope>
    <source>
        <strain>Rowbotham-Bradford</strain>
    </source>
</reference>
<gene>
    <name type="ordered locus">MIMI_L582</name>
</gene>
<accession>Q5UR54</accession>
<keyword id="KW-1185">Reference proteome</keyword>
<protein>
    <recommendedName>
        <fullName>Uncharacterized protein L582</fullName>
    </recommendedName>
</protein>
<dbReference type="EMBL" id="AY653733">
    <property type="protein sequence ID" value="AAV50845.1"/>
    <property type="molecule type" value="Genomic_DNA"/>
</dbReference>
<dbReference type="SMR" id="Q5UR54"/>
<dbReference type="KEGG" id="vg:9925218"/>
<dbReference type="OrthoDB" id="26681at10239"/>
<dbReference type="Proteomes" id="UP000001134">
    <property type="component" value="Genome"/>
</dbReference>
<sequence length="179" mass="20600">MTSQVDDETTNNVNLEIQLTDKAREVLEEVFNLKSNSSLLNNVVEFITKYLTPTKLQQYVDEIRKILDILGKELDTGIELSFEILVSIKNIIEDFYGYLESIKFDLLSKTDRLFVSKHIDLIQQTVIVLAIDKLDESDFISKESLVKILSFVKSINNLTINMKVGRFIPFLKKLICCQC</sequence>
<feature type="chain" id="PRO_0000253284" description="Uncharacterized protein L582">
    <location>
        <begin position="1"/>
        <end position="179"/>
    </location>
</feature>
<organismHost>
    <name type="scientific">Acanthamoeba polyphaga</name>
    <name type="common">Amoeba</name>
    <dbReference type="NCBI Taxonomy" id="5757"/>
</organismHost>
<proteinExistence type="predicted"/>